<evidence type="ECO:0000255" key="1">
    <source>
        <dbReference type="HAMAP-Rule" id="MF_00044"/>
    </source>
</evidence>
<proteinExistence type="inferred from homology"/>
<gene>
    <name evidence="1" type="primary">aspS</name>
    <name type="ordered locus">Aasi_0148</name>
</gene>
<feature type="chain" id="PRO_1000090956" description="Aspartate--tRNA ligase">
    <location>
        <begin position="1"/>
        <end position="582"/>
    </location>
</feature>
<feature type="region of interest" description="Aspartate" evidence="1">
    <location>
        <begin position="198"/>
        <end position="201"/>
    </location>
</feature>
<feature type="binding site" evidence="1">
    <location>
        <begin position="220"/>
        <end position="222"/>
    </location>
    <ligand>
        <name>ATP</name>
        <dbReference type="ChEBI" id="CHEBI:30616"/>
    </ligand>
</feature>
<feature type="binding site" evidence="1">
    <location>
        <position position="220"/>
    </location>
    <ligand>
        <name>L-aspartate</name>
        <dbReference type="ChEBI" id="CHEBI:29991"/>
    </ligand>
</feature>
<feature type="binding site" evidence="1">
    <location>
        <position position="229"/>
    </location>
    <ligand>
        <name>ATP</name>
        <dbReference type="ChEBI" id="CHEBI:30616"/>
    </ligand>
</feature>
<feature type="binding site" evidence="1">
    <location>
        <position position="445"/>
    </location>
    <ligand>
        <name>L-aspartate</name>
        <dbReference type="ChEBI" id="CHEBI:29991"/>
    </ligand>
</feature>
<feature type="binding site" evidence="1">
    <location>
        <position position="479"/>
    </location>
    <ligand>
        <name>ATP</name>
        <dbReference type="ChEBI" id="CHEBI:30616"/>
    </ligand>
</feature>
<feature type="binding site" evidence="1">
    <location>
        <position position="486"/>
    </location>
    <ligand>
        <name>L-aspartate</name>
        <dbReference type="ChEBI" id="CHEBI:29991"/>
    </ligand>
</feature>
<feature type="binding site" evidence="1">
    <location>
        <begin position="531"/>
        <end position="534"/>
    </location>
    <ligand>
        <name>ATP</name>
        <dbReference type="ChEBI" id="CHEBI:30616"/>
    </ligand>
</feature>
<sequence>MLRTHTCGELRLQHIGISVTLCGWVQKIRNKGSLVWIDLRDRYGITQLILEEHITAPEILSQVQHIGREYVIQATGSVIERSAKNPSMPTGDIEIEVKSLTILNTAKTPPFLIEEQTDGGEELRMQYRYLDLRRPPLQKNLLLRQLVAQHARAYLEQHHFVDVETPLLIKSTPGGARDFVVPSRIHPQQFYALPQSPQIFKQLLMVAGLDRYYQIAKCFRDEDFRADRQPEFTQIDCELSFVTQADILHIFENFTKYIFEATIQVRLDKFPCITYAEAMQKYGTDKPDIRFGMRLIELTELVKNSEFPLFKQAKLIAGICVKGCADYTRKQLDDLTEYIKKLNLVTSGLVYVKYLADGSFNSPVSKFYDVEQLTLWAKQMHAVPGDLLLILAGEIEATQIALGSLRLKLRDELHLVSKDKFAPLWVVDFPLLEWNEESQRYVSRHHPFTSPKQEDIELLSTKPETVRANAYDLVINGMEIGGGSIRIHDRALQEQIFNVLGFSEEEARQQFGFLTDAFEYGAPPHGGIAFGFDRLCAIIGREDSIRPFIAFPKNNAGRDVMMKAPSTITEQQISELGIILSK</sequence>
<comment type="function">
    <text evidence="1">Catalyzes the attachment of L-aspartate to tRNA(Asp) in a two-step reaction: L-aspartate is first activated by ATP to form Asp-AMP and then transferred to the acceptor end of tRNA(Asp).</text>
</comment>
<comment type="catalytic activity">
    <reaction evidence="1">
        <text>tRNA(Asp) + L-aspartate + ATP = L-aspartyl-tRNA(Asp) + AMP + diphosphate</text>
        <dbReference type="Rhea" id="RHEA:19649"/>
        <dbReference type="Rhea" id="RHEA-COMP:9660"/>
        <dbReference type="Rhea" id="RHEA-COMP:9678"/>
        <dbReference type="ChEBI" id="CHEBI:29991"/>
        <dbReference type="ChEBI" id="CHEBI:30616"/>
        <dbReference type="ChEBI" id="CHEBI:33019"/>
        <dbReference type="ChEBI" id="CHEBI:78442"/>
        <dbReference type="ChEBI" id="CHEBI:78516"/>
        <dbReference type="ChEBI" id="CHEBI:456215"/>
        <dbReference type="EC" id="6.1.1.12"/>
    </reaction>
</comment>
<comment type="subunit">
    <text evidence="1">Homodimer.</text>
</comment>
<comment type="subcellular location">
    <subcellularLocation>
        <location evidence="1">Cytoplasm</location>
    </subcellularLocation>
</comment>
<comment type="similarity">
    <text evidence="1">Belongs to the class-II aminoacyl-tRNA synthetase family. Type 1 subfamily.</text>
</comment>
<name>SYD_AMOA5</name>
<organism>
    <name type="scientific">Amoebophilus asiaticus (strain 5a2)</name>
    <dbReference type="NCBI Taxonomy" id="452471"/>
    <lineage>
        <taxon>Bacteria</taxon>
        <taxon>Pseudomonadati</taxon>
        <taxon>Bacteroidota</taxon>
        <taxon>Cytophagia</taxon>
        <taxon>Cytophagales</taxon>
        <taxon>Amoebophilaceae</taxon>
        <taxon>Candidatus Amoebophilus</taxon>
    </lineage>
</organism>
<reference key="1">
    <citation type="journal article" date="2010" name="J. Bacteriol.">
        <title>The genome of the amoeba symbiont 'Candidatus Amoebophilus asiaticus' reveals common mechanisms for host cell interaction among amoeba-associated bacteria.</title>
        <authorList>
            <person name="Schmitz-Esser S."/>
            <person name="Tischler P."/>
            <person name="Arnold R."/>
            <person name="Montanaro J."/>
            <person name="Wagner M."/>
            <person name="Rattei T."/>
            <person name="Horn M."/>
        </authorList>
    </citation>
    <scope>NUCLEOTIDE SEQUENCE [LARGE SCALE GENOMIC DNA]</scope>
    <source>
        <strain>5a2</strain>
    </source>
</reference>
<dbReference type="EC" id="6.1.1.12" evidence="1"/>
<dbReference type="EMBL" id="CP001102">
    <property type="protein sequence ID" value="ACE05594.1"/>
    <property type="molecule type" value="Genomic_DNA"/>
</dbReference>
<dbReference type="RefSeq" id="WP_012472362.1">
    <property type="nucleotide sequence ID" value="NC_010830.1"/>
</dbReference>
<dbReference type="SMR" id="B3EUH5"/>
<dbReference type="STRING" id="452471.Aasi_0148"/>
<dbReference type="KEGG" id="aas:Aasi_0148"/>
<dbReference type="eggNOG" id="COG0173">
    <property type="taxonomic scope" value="Bacteria"/>
</dbReference>
<dbReference type="HOGENOM" id="CLU_014330_3_2_10"/>
<dbReference type="OrthoDB" id="9802326at2"/>
<dbReference type="Proteomes" id="UP000001227">
    <property type="component" value="Chromosome"/>
</dbReference>
<dbReference type="GO" id="GO:0005737">
    <property type="term" value="C:cytoplasm"/>
    <property type="evidence" value="ECO:0007669"/>
    <property type="project" value="UniProtKB-SubCell"/>
</dbReference>
<dbReference type="GO" id="GO:0004815">
    <property type="term" value="F:aspartate-tRNA ligase activity"/>
    <property type="evidence" value="ECO:0007669"/>
    <property type="project" value="UniProtKB-UniRule"/>
</dbReference>
<dbReference type="GO" id="GO:0005524">
    <property type="term" value="F:ATP binding"/>
    <property type="evidence" value="ECO:0007669"/>
    <property type="project" value="UniProtKB-UniRule"/>
</dbReference>
<dbReference type="GO" id="GO:0003676">
    <property type="term" value="F:nucleic acid binding"/>
    <property type="evidence" value="ECO:0007669"/>
    <property type="project" value="InterPro"/>
</dbReference>
<dbReference type="GO" id="GO:0006422">
    <property type="term" value="P:aspartyl-tRNA aminoacylation"/>
    <property type="evidence" value="ECO:0007669"/>
    <property type="project" value="UniProtKB-UniRule"/>
</dbReference>
<dbReference type="CDD" id="cd00777">
    <property type="entry name" value="AspRS_core"/>
    <property type="match status" value="1"/>
</dbReference>
<dbReference type="CDD" id="cd04317">
    <property type="entry name" value="EcAspRS_like_N"/>
    <property type="match status" value="1"/>
</dbReference>
<dbReference type="Gene3D" id="3.30.930.10">
    <property type="entry name" value="Bira Bifunctional Protein, Domain 2"/>
    <property type="match status" value="1"/>
</dbReference>
<dbReference type="Gene3D" id="3.30.1360.30">
    <property type="entry name" value="GAD-like domain"/>
    <property type="match status" value="1"/>
</dbReference>
<dbReference type="Gene3D" id="2.40.50.140">
    <property type="entry name" value="Nucleic acid-binding proteins"/>
    <property type="match status" value="1"/>
</dbReference>
<dbReference type="HAMAP" id="MF_00044">
    <property type="entry name" value="Asp_tRNA_synth_type1"/>
    <property type="match status" value="1"/>
</dbReference>
<dbReference type="InterPro" id="IPR004364">
    <property type="entry name" value="Aa-tRNA-synt_II"/>
</dbReference>
<dbReference type="InterPro" id="IPR006195">
    <property type="entry name" value="aa-tRNA-synth_II"/>
</dbReference>
<dbReference type="InterPro" id="IPR045864">
    <property type="entry name" value="aa-tRNA-synth_II/BPL/LPL"/>
</dbReference>
<dbReference type="InterPro" id="IPR004524">
    <property type="entry name" value="Asp-tRNA-ligase_1"/>
</dbReference>
<dbReference type="InterPro" id="IPR047089">
    <property type="entry name" value="Asp-tRNA-ligase_1_N"/>
</dbReference>
<dbReference type="InterPro" id="IPR002312">
    <property type="entry name" value="Asp/Asn-tRNA-synth_IIb"/>
</dbReference>
<dbReference type="InterPro" id="IPR047090">
    <property type="entry name" value="AspRS_core"/>
</dbReference>
<dbReference type="InterPro" id="IPR004115">
    <property type="entry name" value="GAD-like_sf"/>
</dbReference>
<dbReference type="InterPro" id="IPR029351">
    <property type="entry name" value="GAD_dom"/>
</dbReference>
<dbReference type="InterPro" id="IPR012340">
    <property type="entry name" value="NA-bd_OB-fold"/>
</dbReference>
<dbReference type="InterPro" id="IPR004365">
    <property type="entry name" value="NA-bd_OB_tRNA"/>
</dbReference>
<dbReference type="NCBIfam" id="TIGR00459">
    <property type="entry name" value="aspS_bact"/>
    <property type="match status" value="1"/>
</dbReference>
<dbReference type="NCBIfam" id="NF001750">
    <property type="entry name" value="PRK00476.1"/>
    <property type="match status" value="1"/>
</dbReference>
<dbReference type="PANTHER" id="PTHR22594:SF5">
    <property type="entry name" value="ASPARTATE--TRNA LIGASE, MITOCHONDRIAL"/>
    <property type="match status" value="1"/>
</dbReference>
<dbReference type="PANTHER" id="PTHR22594">
    <property type="entry name" value="ASPARTYL/LYSYL-TRNA SYNTHETASE"/>
    <property type="match status" value="1"/>
</dbReference>
<dbReference type="Pfam" id="PF02938">
    <property type="entry name" value="GAD"/>
    <property type="match status" value="1"/>
</dbReference>
<dbReference type="Pfam" id="PF00152">
    <property type="entry name" value="tRNA-synt_2"/>
    <property type="match status" value="1"/>
</dbReference>
<dbReference type="Pfam" id="PF01336">
    <property type="entry name" value="tRNA_anti-codon"/>
    <property type="match status" value="1"/>
</dbReference>
<dbReference type="PRINTS" id="PR01042">
    <property type="entry name" value="TRNASYNTHASP"/>
</dbReference>
<dbReference type="SUPFAM" id="SSF55681">
    <property type="entry name" value="Class II aaRS and biotin synthetases"/>
    <property type="match status" value="1"/>
</dbReference>
<dbReference type="SUPFAM" id="SSF55261">
    <property type="entry name" value="GAD domain-like"/>
    <property type="match status" value="1"/>
</dbReference>
<dbReference type="SUPFAM" id="SSF50249">
    <property type="entry name" value="Nucleic acid-binding proteins"/>
    <property type="match status" value="1"/>
</dbReference>
<dbReference type="PROSITE" id="PS50862">
    <property type="entry name" value="AA_TRNA_LIGASE_II"/>
    <property type="match status" value="1"/>
</dbReference>
<accession>B3EUH5</accession>
<keyword id="KW-0030">Aminoacyl-tRNA synthetase</keyword>
<keyword id="KW-0067">ATP-binding</keyword>
<keyword id="KW-0963">Cytoplasm</keyword>
<keyword id="KW-0436">Ligase</keyword>
<keyword id="KW-0547">Nucleotide-binding</keyword>
<keyword id="KW-0648">Protein biosynthesis</keyword>
<keyword id="KW-1185">Reference proteome</keyword>
<protein>
    <recommendedName>
        <fullName evidence="1">Aspartate--tRNA ligase</fullName>
        <ecNumber evidence="1">6.1.1.12</ecNumber>
    </recommendedName>
    <alternativeName>
        <fullName evidence="1">Aspartyl-tRNA synthetase</fullName>
        <shortName evidence="1">AspRS</shortName>
    </alternativeName>
</protein>